<reference key="1">
    <citation type="submission" date="2001-07" db="EMBL/GenBank/DDBJ databases">
        <title>Genome-wide discovery and analysis of human seven transmembrane helix receptor genes.</title>
        <authorList>
            <person name="Suwa M."/>
            <person name="Sato T."/>
            <person name="Okouchi I."/>
            <person name="Arita M."/>
            <person name="Futami K."/>
            <person name="Matsumoto S."/>
            <person name="Tsutsumi S."/>
            <person name="Aburatani H."/>
            <person name="Asai K."/>
            <person name="Akiyama Y."/>
        </authorList>
    </citation>
    <scope>NUCLEOTIDE SEQUENCE [GENOMIC DNA]</scope>
</reference>
<reference key="2">
    <citation type="journal article" date="2004" name="Genome Res.">
        <title>The status, quality, and expansion of the NIH full-length cDNA project: the Mammalian Gene Collection (MGC).</title>
        <authorList>
            <consortium name="The MGC Project Team"/>
        </authorList>
    </citation>
    <scope>NUCLEOTIDE SEQUENCE [LARGE SCALE MRNA]</scope>
</reference>
<reference key="3">
    <citation type="journal article" date="2004" name="Proc. Natl. Acad. Sci. U.S.A.">
        <title>The human olfactory receptor gene family.</title>
        <authorList>
            <person name="Malnic B."/>
            <person name="Godfrey P.A."/>
            <person name="Buck L.B."/>
        </authorList>
    </citation>
    <scope>IDENTIFICATION</scope>
</reference>
<reference key="4">
    <citation type="journal article" date="2004" name="Proc. Natl. Acad. Sci. U.S.A.">
        <authorList>
            <person name="Malnic B."/>
            <person name="Godfrey P.A."/>
            <person name="Buck L.B."/>
        </authorList>
    </citation>
    <scope>ERRATUM OF PUBMED:14983052</scope>
</reference>
<protein>
    <recommendedName>
        <fullName>Olfactory receptor 5L1</fullName>
    </recommendedName>
    <alternativeName>
        <fullName>OST262</fullName>
    </alternativeName>
    <alternativeName>
        <fullName>Olfactory receptor OR11-151</fullName>
    </alternativeName>
</protein>
<name>OR5L1_HUMAN</name>
<keyword id="KW-1003">Cell membrane</keyword>
<keyword id="KW-1015">Disulfide bond</keyword>
<keyword id="KW-0297">G-protein coupled receptor</keyword>
<keyword id="KW-0325">Glycoprotein</keyword>
<keyword id="KW-0472">Membrane</keyword>
<keyword id="KW-0552">Olfaction</keyword>
<keyword id="KW-0675">Receptor</keyword>
<keyword id="KW-1185">Reference proteome</keyword>
<keyword id="KW-0716">Sensory transduction</keyword>
<keyword id="KW-0807">Transducer</keyword>
<keyword id="KW-0812">Transmembrane</keyword>
<keyword id="KW-1133">Transmembrane helix</keyword>
<comment type="function">
    <text evidence="3">Odorant receptor.</text>
</comment>
<comment type="subcellular location">
    <subcellularLocation>
        <location>Cell membrane</location>
        <topology>Multi-pass membrane protein</topology>
    </subcellularLocation>
</comment>
<comment type="similarity">
    <text evidence="2">Belongs to the G-protein coupled receptor 1 family.</text>
</comment>
<comment type="online information" name="Human Olfactory Receptor Data Exploratorium (HORDE)">
    <link uri="http://genome.weizmann.ac.il/horde/card/index/symbol:OR5L1"/>
</comment>
<accession>Q8NGL2</accession>
<accession>B2RNK6</accession>
<accession>Q6IFD0</accession>
<evidence type="ECO:0000255" key="1"/>
<evidence type="ECO:0000255" key="2">
    <source>
        <dbReference type="PROSITE-ProRule" id="PRU00521"/>
    </source>
</evidence>
<evidence type="ECO:0000305" key="3"/>
<feature type="chain" id="PRO_0000150602" description="Olfactory receptor 5L1">
    <location>
        <begin position="1"/>
        <end position="311"/>
    </location>
</feature>
<feature type="topological domain" description="Extracellular" evidence="1">
    <location>
        <begin position="1"/>
        <end position="25"/>
    </location>
</feature>
<feature type="transmembrane region" description="Helical; Name=1" evidence="1">
    <location>
        <begin position="26"/>
        <end position="46"/>
    </location>
</feature>
<feature type="topological domain" description="Cytoplasmic" evidence="1">
    <location>
        <begin position="47"/>
        <end position="54"/>
    </location>
</feature>
<feature type="transmembrane region" description="Helical; Name=2" evidence="1">
    <location>
        <begin position="55"/>
        <end position="75"/>
    </location>
</feature>
<feature type="topological domain" description="Extracellular" evidence="1">
    <location>
        <begin position="76"/>
        <end position="99"/>
    </location>
</feature>
<feature type="transmembrane region" description="Helical; Name=3" evidence="1">
    <location>
        <begin position="100"/>
        <end position="120"/>
    </location>
</feature>
<feature type="topological domain" description="Cytoplasmic" evidence="1">
    <location>
        <begin position="121"/>
        <end position="139"/>
    </location>
</feature>
<feature type="transmembrane region" description="Helical; Name=4" evidence="1">
    <location>
        <begin position="140"/>
        <end position="160"/>
    </location>
</feature>
<feature type="topological domain" description="Extracellular" evidence="1">
    <location>
        <begin position="161"/>
        <end position="196"/>
    </location>
</feature>
<feature type="transmembrane region" description="Helical; Name=5" evidence="1">
    <location>
        <begin position="197"/>
        <end position="217"/>
    </location>
</feature>
<feature type="topological domain" description="Cytoplasmic" evidence="1">
    <location>
        <begin position="218"/>
        <end position="237"/>
    </location>
</feature>
<feature type="transmembrane region" description="Helical; Name=6" evidence="1">
    <location>
        <begin position="238"/>
        <end position="258"/>
    </location>
</feature>
<feature type="topological domain" description="Extracellular" evidence="1">
    <location>
        <begin position="259"/>
        <end position="271"/>
    </location>
</feature>
<feature type="transmembrane region" description="Helical; Name=7" evidence="1">
    <location>
        <begin position="272"/>
        <end position="292"/>
    </location>
</feature>
<feature type="topological domain" description="Cytoplasmic" evidence="1">
    <location>
        <begin position="293"/>
        <end position="311"/>
    </location>
</feature>
<feature type="glycosylation site" description="N-linked (GlcNAc...) asparagine" evidence="1">
    <location>
        <position position="5"/>
    </location>
</feature>
<feature type="glycosylation site" description="N-linked (GlcNAc...) asparagine" evidence="1">
    <location>
        <position position="195"/>
    </location>
</feature>
<feature type="disulfide bond" evidence="2">
    <location>
        <begin position="97"/>
        <end position="189"/>
    </location>
</feature>
<feature type="sequence variant" id="VAR_034227" description="In dbSNP:rs2869020.">
    <original>I</original>
    <variation>F</variation>
    <location>
        <position position="46"/>
    </location>
</feature>
<feature type="sequence variant" id="VAR_062044" description="In dbSNP:rs34961497.">
    <original>R</original>
    <variation>W</variation>
    <location>
        <position position="54"/>
    </location>
</feature>
<feature type="sequence variant" id="VAR_034228" description="In dbSNP:rs12790505.">
    <original>S</original>
    <variation>P</variation>
    <location>
        <position position="287"/>
    </location>
</feature>
<sequence>MGKENCTTVAEFILLGLSDVPELRVCLFLLFLLIYGVTLLANLGMIALIQVSSRLHTPMYFFLSHLSSVDFCYSSIIVPKMLANIFNKDKAISFLGCMVQFYLFCTCVVTEVFLLAVMAYDRFVAICNPLLYTVTMSWKVRVELASCCYFCGTVCSLIHLCLALRIPFYRSNVINHFFCDLPPVLSLACSDITVNETLLFLVATLNESVTIMIILTSYLLILTTILKMGSAEGRHKAFSTCASHLTAITVFHGTVLSIYCRPSSGNSGDADKVATVFYTVVIPMLNSVIYSLRNKDVKEALRKVMGSKIHS</sequence>
<organism>
    <name type="scientific">Homo sapiens</name>
    <name type="common">Human</name>
    <dbReference type="NCBI Taxonomy" id="9606"/>
    <lineage>
        <taxon>Eukaryota</taxon>
        <taxon>Metazoa</taxon>
        <taxon>Chordata</taxon>
        <taxon>Craniata</taxon>
        <taxon>Vertebrata</taxon>
        <taxon>Euteleostomi</taxon>
        <taxon>Mammalia</taxon>
        <taxon>Eutheria</taxon>
        <taxon>Euarchontoglires</taxon>
        <taxon>Primates</taxon>
        <taxon>Haplorrhini</taxon>
        <taxon>Catarrhini</taxon>
        <taxon>Hominidae</taxon>
        <taxon>Homo</taxon>
    </lineage>
</organism>
<proteinExistence type="evidence at transcript level"/>
<dbReference type="EMBL" id="AB065780">
    <property type="protein sequence ID" value="BAC06000.1"/>
    <property type="molecule type" value="Genomic_DNA"/>
</dbReference>
<dbReference type="EMBL" id="BC109249">
    <property type="protein sequence ID" value="AAI09250.1"/>
    <property type="molecule type" value="mRNA"/>
</dbReference>
<dbReference type="EMBL" id="BC109250">
    <property type="protein sequence ID" value="AAI09251.1"/>
    <property type="molecule type" value="mRNA"/>
</dbReference>
<dbReference type="EMBL" id="BC136939">
    <property type="protein sequence ID" value="AAI36940.1"/>
    <property type="molecule type" value="mRNA"/>
</dbReference>
<dbReference type="EMBL" id="BK004332">
    <property type="protein sequence ID" value="DAA04730.1"/>
    <property type="molecule type" value="Genomic_DNA"/>
</dbReference>
<dbReference type="RefSeq" id="NP_001004738.1">
    <property type="nucleotide sequence ID" value="NM_001004738.2"/>
</dbReference>
<dbReference type="SMR" id="Q8NGL2"/>
<dbReference type="BioGRID" id="128535">
    <property type="interactions" value="8"/>
</dbReference>
<dbReference type="FunCoup" id="Q8NGL2">
    <property type="interactions" value="417"/>
</dbReference>
<dbReference type="IntAct" id="Q8NGL2">
    <property type="interactions" value="2"/>
</dbReference>
<dbReference type="STRING" id="9606.ENSP00000485319"/>
<dbReference type="GlyCosmos" id="Q8NGL2">
    <property type="glycosylation" value="2 sites, No reported glycans"/>
</dbReference>
<dbReference type="GlyGen" id="Q8NGL2">
    <property type="glycosylation" value="2 sites"/>
</dbReference>
<dbReference type="iPTMnet" id="Q8NGL2"/>
<dbReference type="PhosphoSitePlus" id="Q8NGL2"/>
<dbReference type="BioMuta" id="OR5L1"/>
<dbReference type="DMDM" id="38372721"/>
<dbReference type="MassIVE" id="Q8NGL2"/>
<dbReference type="PaxDb" id="9606-ENSP00000335529"/>
<dbReference type="Antibodypedia" id="78667">
    <property type="antibodies" value="44 antibodies from 14 providers"/>
</dbReference>
<dbReference type="DNASU" id="219437"/>
<dbReference type="Ensembl" id="ENST00000625203.2">
    <property type="protein sequence ID" value="ENSP00000485319.1"/>
    <property type="gene ID" value="ENSG00000279395.3"/>
</dbReference>
<dbReference type="GeneID" id="219437"/>
<dbReference type="KEGG" id="hsa:219437"/>
<dbReference type="MANE-Select" id="ENST00000625203.2">
    <property type="protein sequence ID" value="ENSP00000485319.1"/>
    <property type="RefSeq nucleotide sequence ID" value="NM_001004738.2"/>
    <property type="RefSeq protein sequence ID" value="NP_001004738.1"/>
</dbReference>
<dbReference type="UCSC" id="uc001nhw.1">
    <property type="organism name" value="human"/>
</dbReference>
<dbReference type="AGR" id="HGNC:8350"/>
<dbReference type="CTD" id="219437"/>
<dbReference type="DisGeNET" id="219437"/>
<dbReference type="GeneCards" id="OR5L1"/>
<dbReference type="HGNC" id="HGNC:8350">
    <property type="gene designation" value="OR5L1"/>
</dbReference>
<dbReference type="HPA" id="ENSG00000279395">
    <property type="expression patterns" value="Not detected"/>
</dbReference>
<dbReference type="MalaCards" id="OR5L1"/>
<dbReference type="neXtProt" id="NX_Q8NGL2"/>
<dbReference type="PharmGKB" id="PA32544"/>
<dbReference type="VEuPathDB" id="HostDB:ENSG00000279395"/>
<dbReference type="eggNOG" id="ENOG502T9KN">
    <property type="taxonomic scope" value="Eukaryota"/>
</dbReference>
<dbReference type="GeneTree" id="ENSGT01130000278300"/>
<dbReference type="HOGENOM" id="CLU_012526_5_5_1"/>
<dbReference type="InParanoid" id="Q8NGL2"/>
<dbReference type="OMA" id="ELASCCY"/>
<dbReference type="OrthoDB" id="9448403at2759"/>
<dbReference type="PAN-GO" id="Q8NGL2">
    <property type="GO annotations" value="4 GO annotations based on evolutionary models"/>
</dbReference>
<dbReference type="PhylomeDB" id="Q8NGL2"/>
<dbReference type="TreeFam" id="TF352753"/>
<dbReference type="PathwayCommons" id="Q8NGL2"/>
<dbReference type="Reactome" id="R-HSA-9752946">
    <property type="pathway name" value="Expression and translocation of olfactory receptors"/>
</dbReference>
<dbReference type="BioGRID-ORCS" id="219437">
    <property type="hits" value="8 hits in 682 CRISPR screens"/>
</dbReference>
<dbReference type="GeneWiki" id="OR5L1"/>
<dbReference type="GenomeRNAi" id="219437"/>
<dbReference type="Pharos" id="Q8NGL2">
    <property type="development level" value="Tdark"/>
</dbReference>
<dbReference type="PRO" id="PR:Q8NGL2"/>
<dbReference type="Proteomes" id="UP000005640">
    <property type="component" value="Chromosome 11"/>
</dbReference>
<dbReference type="RNAct" id="Q8NGL2">
    <property type="molecule type" value="protein"/>
</dbReference>
<dbReference type="Bgee" id="ENSG00000279395">
    <property type="expression patterns" value="Expressed in primordial germ cell in gonad"/>
</dbReference>
<dbReference type="ExpressionAtlas" id="Q8NGL2">
    <property type="expression patterns" value="differential"/>
</dbReference>
<dbReference type="GO" id="GO:0005886">
    <property type="term" value="C:plasma membrane"/>
    <property type="evidence" value="ECO:0007669"/>
    <property type="project" value="UniProtKB-SubCell"/>
</dbReference>
<dbReference type="GO" id="GO:0004930">
    <property type="term" value="F:G protein-coupled receptor activity"/>
    <property type="evidence" value="ECO:0007669"/>
    <property type="project" value="UniProtKB-KW"/>
</dbReference>
<dbReference type="GO" id="GO:0005549">
    <property type="term" value="F:odorant binding"/>
    <property type="evidence" value="ECO:0000318"/>
    <property type="project" value="GO_Central"/>
</dbReference>
<dbReference type="GO" id="GO:0004984">
    <property type="term" value="F:olfactory receptor activity"/>
    <property type="evidence" value="ECO:0000318"/>
    <property type="project" value="GO_Central"/>
</dbReference>
<dbReference type="GO" id="GO:0007186">
    <property type="term" value="P:G protein-coupled receptor signaling pathway"/>
    <property type="evidence" value="ECO:0000318"/>
    <property type="project" value="GO_Central"/>
</dbReference>
<dbReference type="GO" id="GO:0007608">
    <property type="term" value="P:sensory perception of smell"/>
    <property type="evidence" value="ECO:0000318"/>
    <property type="project" value="GO_Central"/>
</dbReference>
<dbReference type="CDD" id="cd15410">
    <property type="entry name" value="7tmA_OR5D-like"/>
    <property type="match status" value="1"/>
</dbReference>
<dbReference type="FunFam" id="1.10.1220.70:FF:000001">
    <property type="entry name" value="Olfactory receptor"/>
    <property type="match status" value="1"/>
</dbReference>
<dbReference type="FunFam" id="1.20.1070.10:FF:000003">
    <property type="entry name" value="Olfactory receptor"/>
    <property type="match status" value="1"/>
</dbReference>
<dbReference type="Gene3D" id="1.20.1070.10">
    <property type="entry name" value="Rhodopsin 7-helix transmembrane proteins"/>
    <property type="match status" value="1"/>
</dbReference>
<dbReference type="InterPro" id="IPR000276">
    <property type="entry name" value="GPCR_Rhodpsn"/>
</dbReference>
<dbReference type="InterPro" id="IPR017452">
    <property type="entry name" value="GPCR_Rhodpsn_7TM"/>
</dbReference>
<dbReference type="InterPro" id="IPR000725">
    <property type="entry name" value="Olfact_rcpt"/>
</dbReference>
<dbReference type="PANTHER" id="PTHR48018">
    <property type="entry name" value="OLFACTORY RECEPTOR"/>
    <property type="match status" value="1"/>
</dbReference>
<dbReference type="Pfam" id="PF13853">
    <property type="entry name" value="7tm_4"/>
    <property type="match status" value="1"/>
</dbReference>
<dbReference type="PRINTS" id="PR00237">
    <property type="entry name" value="GPCRRHODOPSN"/>
</dbReference>
<dbReference type="PRINTS" id="PR00245">
    <property type="entry name" value="OLFACTORYR"/>
</dbReference>
<dbReference type="SUPFAM" id="SSF81321">
    <property type="entry name" value="Family A G protein-coupled receptor-like"/>
    <property type="match status" value="1"/>
</dbReference>
<dbReference type="PROSITE" id="PS00237">
    <property type="entry name" value="G_PROTEIN_RECEP_F1_1"/>
    <property type="match status" value="1"/>
</dbReference>
<dbReference type="PROSITE" id="PS50262">
    <property type="entry name" value="G_PROTEIN_RECEP_F1_2"/>
    <property type="match status" value="1"/>
</dbReference>
<gene>
    <name type="primary">OR5L1</name>
</gene>